<keyword id="KW-1185">Reference proteome</keyword>
<keyword id="KW-0687">Ribonucleoprotein</keyword>
<keyword id="KW-0689">Ribosomal protein</keyword>
<accession>Q5NI53</accession>
<protein>
    <recommendedName>
        <fullName evidence="1">Large ribosomal subunit protein bL34</fullName>
    </recommendedName>
    <alternativeName>
        <fullName evidence="2">50S ribosomal protein L34</fullName>
    </alternativeName>
</protein>
<feature type="chain" id="PRO_0000187384" description="Large ribosomal subunit protein bL34">
    <location>
        <begin position="1"/>
        <end position="44"/>
    </location>
</feature>
<organism>
    <name type="scientific">Francisella tularensis subsp. tularensis (strain SCHU S4 / Schu 4)</name>
    <dbReference type="NCBI Taxonomy" id="177416"/>
    <lineage>
        <taxon>Bacteria</taxon>
        <taxon>Pseudomonadati</taxon>
        <taxon>Pseudomonadota</taxon>
        <taxon>Gammaproteobacteria</taxon>
        <taxon>Thiotrichales</taxon>
        <taxon>Francisellaceae</taxon>
        <taxon>Francisella</taxon>
    </lineage>
</organism>
<evidence type="ECO:0000255" key="1">
    <source>
        <dbReference type="HAMAP-Rule" id="MF_00391"/>
    </source>
</evidence>
<evidence type="ECO:0000305" key="2"/>
<proteinExistence type="inferred from homology"/>
<name>RL34_FRATT</name>
<sequence length="44" mass="5180">MKRTFQPSNLKRKRTHGFRARMKTLSGRKVIRNRRAKGRAKLAA</sequence>
<dbReference type="EMBL" id="AJ749949">
    <property type="protein sequence ID" value="CAG44869.1"/>
    <property type="molecule type" value="Genomic_DNA"/>
</dbReference>
<dbReference type="RefSeq" id="WP_003014180.1">
    <property type="nucleotide sequence ID" value="NZ_CP010290.1"/>
</dbReference>
<dbReference type="RefSeq" id="YP_169289.1">
    <property type="nucleotide sequence ID" value="NC_006570.2"/>
</dbReference>
<dbReference type="SMR" id="Q5NI53"/>
<dbReference type="STRING" id="177416.FTT_0236c"/>
<dbReference type="DNASU" id="3191988"/>
<dbReference type="EnsemblBacteria" id="CAG44869">
    <property type="protein sequence ID" value="CAG44869"/>
    <property type="gene ID" value="FTT_0236c"/>
</dbReference>
<dbReference type="GeneID" id="93255665"/>
<dbReference type="KEGG" id="ftu:FTT_0236c"/>
<dbReference type="eggNOG" id="COG0230">
    <property type="taxonomic scope" value="Bacteria"/>
</dbReference>
<dbReference type="OrthoDB" id="9804164at2"/>
<dbReference type="Proteomes" id="UP000001174">
    <property type="component" value="Chromosome"/>
</dbReference>
<dbReference type="GO" id="GO:1990904">
    <property type="term" value="C:ribonucleoprotein complex"/>
    <property type="evidence" value="ECO:0007669"/>
    <property type="project" value="UniProtKB-KW"/>
</dbReference>
<dbReference type="GO" id="GO:0005840">
    <property type="term" value="C:ribosome"/>
    <property type="evidence" value="ECO:0007669"/>
    <property type="project" value="UniProtKB-KW"/>
</dbReference>
<dbReference type="GO" id="GO:0003735">
    <property type="term" value="F:structural constituent of ribosome"/>
    <property type="evidence" value="ECO:0007669"/>
    <property type="project" value="InterPro"/>
</dbReference>
<dbReference type="GO" id="GO:0006412">
    <property type="term" value="P:translation"/>
    <property type="evidence" value="ECO:0007669"/>
    <property type="project" value="UniProtKB-UniRule"/>
</dbReference>
<dbReference type="FunFam" id="1.10.287.3980:FF:000001">
    <property type="entry name" value="Mitochondrial ribosomal protein L34"/>
    <property type="match status" value="1"/>
</dbReference>
<dbReference type="Gene3D" id="1.10.287.3980">
    <property type="match status" value="1"/>
</dbReference>
<dbReference type="HAMAP" id="MF_00391">
    <property type="entry name" value="Ribosomal_bL34"/>
    <property type="match status" value="1"/>
</dbReference>
<dbReference type="InterPro" id="IPR000271">
    <property type="entry name" value="Ribosomal_bL34"/>
</dbReference>
<dbReference type="InterPro" id="IPR020939">
    <property type="entry name" value="Ribosomal_bL34_CS"/>
</dbReference>
<dbReference type="NCBIfam" id="TIGR01030">
    <property type="entry name" value="rpmH_bact"/>
    <property type="match status" value="1"/>
</dbReference>
<dbReference type="PANTHER" id="PTHR14503:SF4">
    <property type="entry name" value="LARGE RIBOSOMAL SUBUNIT PROTEIN BL34M"/>
    <property type="match status" value="1"/>
</dbReference>
<dbReference type="PANTHER" id="PTHR14503">
    <property type="entry name" value="MITOCHONDRIAL RIBOSOMAL PROTEIN 34 FAMILY MEMBER"/>
    <property type="match status" value="1"/>
</dbReference>
<dbReference type="Pfam" id="PF00468">
    <property type="entry name" value="Ribosomal_L34"/>
    <property type="match status" value="1"/>
</dbReference>
<dbReference type="PROSITE" id="PS00784">
    <property type="entry name" value="RIBOSOMAL_L34"/>
    <property type="match status" value="1"/>
</dbReference>
<gene>
    <name evidence="1" type="primary">rpmH</name>
    <name type="ordered locus">FTT_0236c</name>
</gene>
<reference key="1">
    <citation type="journal article" date="2005" name="Nat. Genet.">
        <title>The complete genome sequence of Francisella tularensis, the causative agent of tularemia.</title>
        <authorList>
            <person name="Larsson P."/>
            <person name="Oyston P.C.F."/>
            <person name="Chain P."/>
            <person name="Chu M.C."/>
            <person name="Duffield M."/>
            <person name="Fuxelius H.-H."/>
            <person name="Garcia E."/>
            <person name="Haelltorp G."/>
            <person name="Johansson D."/>
            <person name="Isherwood K.E."/>
            <person name="Karp P.D."/>
            <person name="Larsson E."/>
            <person name="Liu Y."/>
            <person name="Michell S."/>
            <person name="Prior J."/>
            <person name="Prior R."/>
            <person name="Malfatti S."/>
            <person name="Sjoestedt A."/>
            <person name="Svensson K."/>
            <person name="Thompson N."/>
            <person name="Vergez L."/>
            <person name="Wagg J.K."/>
            <person name="Wren B.W."/>
            <person name="Lindler L.E."/>
            <person name="Andersson S.G.E."/>
            <person name="Forsman M."/>
            <person name="Titball R.W."/>
        </authorList>
    </citation>
    <scope>NUCLEOTIDE SEQUENCE [LARGE SCALE GENOMIC DNA]</scope>
    <source>
        <strain>SCHU S4 / Schu 4</strain>
    </source>
</reference>
<comment type="similarity">
    <text evidence="1">Belongs to the bacterial ribosomal protein bL34 family.</text>
</comment>